<sequence length="308" mass="34160">MNETSSYTIEEVAGLLKVSKLTVYDLIKKGVLPAYRVGRQMRVDEEDLKQYKTNMRMSQPIAAKEAPKQVQEAEPDGRPNVMISGQDISMDILSKHLENAIQETPLRKYKGSLNSLIDMYQGKCDIVSLHLYDAETGQYNAPYVKRILTGEPFCLINVVLRKAGLYVQKGNPKNIQGWKDLKRADIRIINREKGSGARVLLDEQLGLLGVNPADVVGYGDIVTDHYAAASQVSSGQADAGIGAQHAAHMGSVDFIPLIDEQYDIVVLKKNEQLLKAVKEILNSEDYKANLSHLNGYETKLTGKVILET</sequence>
<feature type="chain" id="PRO_0000359912" description="Uncharacterized protein YvgK">
    <location>
        <begin position="1"/>
        <end position="308"/>
    </location>
</feature>
<accession>O32207</accession>
<accession>Q7B2K9</accession>
<organism>
    <name type="scientific">Bacillus subtilis (strain 168)</name>
    <dbReference type="NCBI Taxonomy" id="224308"/>
    <lineage>
        <taxon>Bacteria</taxon>
        <taxon>Bacillati</taxon>
        <taxon>Bacillota</taxon>
        <taxon>Bacilli</taxon>
        <taxon>Bacillales</taxon>
        <taxon>Bacillaceae</taxon>
        <taxon>Bacillus</taxon>
    </lineage>
</organism>
<dbReference type="EMBL" id="AJ223978">
    <property type="protein sequence ID" value="CAA11715.1"/>
    <property type="molecule type" value="Genomic_DNA"/>
</dbReference>
<dbReference type="EMBL" id="AL009126">
    <property type="protein sequence ID" value="CAB15342.1"/>
    <property type="molecule type" value="Genomic_DNA"/>
</dbReference>
<dbReference type="PIR" id="H70039">
    <property type="entry name" value="H70039"/>
</dbReference>
<dbReference type="RefSeq" id="NP_391217.1">
    <property type="nucleotide sequence ID" value="NC_000964.3"/>
</dbReference>
<dbReference type="RefSeq" id="WP_003243439.1">
    <property type="nucleotide sequence ID" value="NZ_OZ025638.1"/>
</dbReference>
<dbReference type="FunCoup" id="O32207">
    <property type="interactions" value="4"/>
</dbReference>
<dbReference type="STRING" id="224308.BSU33370"/>
<dbReference type="PaxDb" id="224308-BSU33370"/>
<dbReference type="EnsemblBacteria" id="CAB15342">
    <property type="protein sequence ID" value="CAB15342"/>
    <property type="gene ID" value="BSU_33370"/>
</dbReference>
<dbReference type="GeneID" id="936008"/>
<dbReference type="KEGG" id="bsu:BSU33370"/>
<dbReference type="PATRIC" id="fig|224308.179.peg.3622"/>
<dbReference type="eggNOG" id="COG1910">
    <property type="taxonomic scope" value="Bacteria"/>
</dbReference>
<dbReference type="InParanoid" id="O32207"/>
<dbReference type="OrthoDB" id="9805928at2"/>
<dbReference type="PhylomeDB" id="O32207"/>
<dbReference type="BioCyc" id="BSUB:BSU33370-MONOMER"/>
<dbReference type="Proteomes" id="UP000001570">
    <property type="component" value="Chromosome"/>
</dbReference>
<dbReference type="GO" id="GO:0003677">
    <property type="term" value="F:DNA binding"/>
    <property type="evidence" value="ECO:0007669"/>
    <property type="project" value="InterPro"/>
</dbReference>
<dbReference type="Gene3D" id="3.40.190.10">
    <property type="entry name" value="Periplasmic binding protein-like II"/>
    <property type="match status" value="1"/>
</dbReference>
<dbReference type="InterPro" id="IPR009061">
    <property type="entry name" value="DNA-bd_dom_put_sf"/>
</dbReference>
<dbReference type="InterPro" id="IPR041657">
    <property type="entry name" value="HTH_17"/>
</dbReference>
<dbReference type="InterPro" id="IPR024370">
    <property type="entry name" value="PBP_domain"/>
</dbReference>
<dbReference type="InterPro" id="IPR010093">
    <property type="entry name" value="SinI_DNA-bd"/>
</dbReference>
<dbReference type="NCBIfam" id="TIGR01764">
    <property type="entry name" value="excise"/>
    <property type="match status" value="1"/>
</dbReference>
<dbReference type="PANTHER" id="PTHR38431">
    <property type="entry name" value="BLL2305 PROTEIN"/>
    <property type="match status" value="1"/>
</dbReference>
<dbReference type="PANTHER" id="PTHR38431:SF1">
    <property type="entry name" value="BLL2305 PROTEIN"/>
    <property type="match status" value="1"/>
</dbReference>
<dbReference type="Pfam" id="PF12728">
    <property type="entry name" value="HTH_17"/>
    <property type="match status" value="1"/>
</dbReference>
<dbReference type="Pfam" id="PF12727">
    <property type="entry name" value="PBP_like"/>
    <property type="match status" value="1"/>
</dbReference>
<dbReference type="SUPFAM" id="SSF53850">
    <property type="entry name" value="Periplasmic binding protein-like II"/>
    <property type="match status" value="1"/>
</dbReference>
<dbReference type="SUPFAM" id="SSF46955">
    <property type="entry name" value="Putative DNA-binding domain"/>
    <property type="match status" value="1"/>
</dbReference>
<keyword id="KW-1185">Reference proteome</keyword>
<protein>
    <recommendedName>
        <fullName>Uncharacterized protein YvgK</fullName>
    </recommendedName>
</protein>
<name>YVGK_BACSU</name>
<gene>
    <name type="primary">yvgK</name>
    <name type="synonym">yvsE</name>
    <name type="ordered locus">BSU33370</name>
</gene>
<reference key="1">
    <citation type="journal article" date="1998" name="Microbiology">
        <title>The yvsA-yvqA (293 degrees - 289 degrees) region of the Bacillus subtilis chromosome containing genes involved in metal ion uptake and a putative sigma factor.</title>
        <authorList>
            <person name="Wipat A."/>
            <person name="Brignell C.S."/>
            <person name="Guy J.B."/>
            <person name="Rose M."/>
            <person name="Emmerson P.T."/>
            <person name="Harwood C.R."/>
        </authorList>
    </citation>
    <scope>NUCLEOTIDE SEQUENCE [GENOMIC DNA]</scope>
    <source>
        <strain>168</strain>
    </source>
</reference>
<reference key="2">
    <citation type="journal article" date="1997" name="Nature">
        <title>The complete genome sequence of the Gram-positive bacterium Bacillus subtilis.</title>
        <authorList>
            <person name="Kunst F."/>
            <person name="Ogasawara N."/>
            <person name="Moszer I."/>
            <person name="Albertini A.M."/>
            <person name="Alloni G."/>
            <person name="Azevedo V."/>
            <person name="Bertero M.G."/>
            <person name="Bessieres P."/>
            <person name="Bolotin A."/>
            <person name="Borchert S."/>
            <person name="Borriss R."/>
            <person name="Boursier L."/>
            <person name="Brans A."/>
            <person name="Braun M."/>
            <person name="Brignell S.C."/>
            <person name="Bron S."/>
            <person name="Brouillet S."/>
            <person name="Bruschi C.V."/>
            <person name="Caldwell B."/>
            <person name="Capuano V."/>
            <person name="Carter N.M."/>
            <person name="Choi S.-K."/>
            <person name="Codani J.-J."/>
            <person name="Connerton I.F."/>
            <person name="Cummings N.J."/>
            <person name="Daniel R.A."/>
            <person name="Denizot F."/>
            <person name="Devine K.M."/>
            <person name="Duesterhoeft A."/>
            <person name="Ehrlich S.D."/>
            <person name="Emmerson P.T."/>
            <person name="Entian K.-D."/>
            <person name="Errington J."/>
            <person name="Fabret C."/>
            <person name="Ferrari E."/>
            <person name="Foulger D."/>
            <person name="Fritz C."/>
            <person name="Fujita M."/>
            <person name="Fujita Y."/>
            <person name="Fuma S."/>
            <person name="Galizzi A."/>
            <person name="Galleron N."/>
            <person name="Ghim S.-Y."/>
            <person name="Glaser P."/>
            <person name="Goffeau A."/>
            <person name="Golightly E.J."/>
            <person name="Grandi G."/>
            <person name="Guiseppi G."/>
            <person name="Guy B.J."/>
            <person name="Haga K."/>
            <person name="Haiech J."/>
            <person name="Harwood C.R."/>
            <person name="Henaut A."/>
            <person name="Hilbert H."/>
            <person name="Holsappel S."/>
            <person name="Hosono S."/>
            <person name="Hullo M.-F."/>
            <person name="Itaya M."/>
            <person name="Jones L.-M."/>
            <person name="Joris B."/>
            <person name="Karamata D."/>
            <person name="Kasahara Y."/>
            <person name="Klaerr-Blanchard M."/>
            <person name="Klein C."/>
            <person name="Kobayashi Y."/>
            <person name="Koetter P."/>
            <person name="Koningstein G."/>
            <person name="Krogh S."/>
            <person name="Kumano M."/>
            <person name="Kurita K."/>
            <person name="Lapidus A."/>
            <person name="Lardinois S."/>
            <person name="Lauber J."/>
            <person name="Lazarevic V."/>
            <person name="Lee S.-M."/>
            <person name="Levine A."/>
            <person name="Liu H."/>
            <person name="Masuda S."/>
            <person name="Mauel C."/>
            <person name="Medigue C."/>
            <person name="Medina N."/>
            <person name="Mellado R.P."/>
            <person name="Mizuno M."/>
            <person name="Moestl D."/>
            <person name="Nakai S."/>
            <person name="Noback M."/>
            <person name="Noone D."/>
            <person name="O'Reilly M."/>
            <person name="Ogawa K."/>
            <person name="Ogiwara A."/>
            <person name="Oudega B."/>
            <person name="Park S.-H."/>
            <person name="Parro V."/>
            <person name="Pohl T.M."/>
            <person name="Portetelle D."/>
            <person name="Porwollik S."/>
            <person name="Prescott A.M."/>
            <person name="Presecan E."/>
            <person name="Pujic P."/>
            <person name="Purnelle B."/>
            <person name="Rapoport G."/>
            <person name="Rey M."/>
            <person name="Reynolds S."/>
            <person name="Rieger M."/>
            <person name="Rivolta C."/>
            <person name="Rocha E."/>
            <person name="Roche B."/>
            <person name="Rose M."/>
            <person name="Sadaie Y."/>
            <person name="Sato T."/>
            <person name="Scanlan E."/>
            <person name="Schleich S."/>
            <person name="Schroeter R."/>
            <person name="Scoffone F."/>
            <person name="Sekiguchi J."/>
            <person name="Sekowska A."/>
            <person name="Seror S.J."/>
            <person name="Serror P."/>
            <person name="Shin B.-S."/>
            <person name="Soldo B."/>
            <person name="Sorokin A."/>
            <person name="Tacconi E."/>
            <person name="Takagi T."/>
            <person name="Takahashi H."/>
            <person name="Takemaru K."/>
            <person name="Takeuchi M."/>
            <person name="Tamakoshi A."/>
            <person name="Tanaka T."/>
            <person name="Terpstra P."/>
            <person name="Tognoni A."/>
            <person name="Tosato V."/>
            <person name="Uchiyama S."/>
            <person name="Vandenbol M."/>
            <person name="Vannier F."/>
            <person name="Vassarotti A."/>
            <person name="Viari A."/>
            <person name="Wambutt R."/>
            <person name="Wedler E."/>
            <person name="Wedler H."/>
            <person name="Weitzenegger T."/>
            <person name="Winters P."/>
            <person name="Wipat A."/>
            <person name="Yamamoto H."/>
            <person name="Yamane K."/>
            <person name="Yasumoto K."/>
            <person name="Yata K."/>
            <person name="Yoshida K."/>
            <person name="Yoshikawa H.-F."/>
            <person name="Zumstein E."/>
            <person name="Yoshikawa H."/>
            <person name="Danchin A."/>
        </authorList>
    </citation>
    <scope>NUCLEOTIDE SEQUENCE [LARGE SCALE GENOMIC DNA]</scope>
    <source>
        <strain>168</strain>
    </source>
</reference>
<proteinExistence type="predicted"/>